<gene>
    <name evidence="1" type="primary">gpmA</name>
    <name type="ordered locus">Spro_1288</name>
</gene>
<reference key="1">
    <citation type="submission" date="2007-09" db="EMBL/GenBank/DDBJ databases">
        <title>Complete sequence of chromosome of Serratia proteamaculans 568.</title>
        <authorList>
            <consortium name="US DOE Joint Genome Institute"/>
            <person name="Copeland A."/>
            <person name="Lucas S."/>
            <person name="Lapidus A."/>
            <person name="Barry K."/>
            <person name="Glavina del Rio T."/>
            <person name="Dalin E."/>
            <person name="Tice H."/>
            <person name="Pitluck S."/>
            <person name="Chain P."/>
            <person name="Malfatti S."/>
            <person name="Shin M."/>
            <person name="Vergez L."/>
            <person name="Schmutz J."/>
            <person name="Larimer F."/>
            <person name="Land M."/>
            <person name="Hauser L."/>
            <person name="Kyrpides N."/>
            <person name="Kim E."/>
            <person name="Taghavi S."/>
            <person name="Newman L."/>
            <person name="Vangronsveld J."/>
            <person name="van der Lelie D."/>
            <person name="Richardson P."/>
        </authorList>
    </citation>
    <scope>NUCLEOTIDE SEQUENCE [LARGE SCALE GENOMIC DNA]</scope>
    <source>
        <strain>568</strain>
    </source>
</reference>
<comment type="function">
    <text evidence="1">Catalyzes the interconversion of 2-phosphoglycerate and 3-phosphoglycerate.</text>
</comment>
<comment type="catalytic activity">
    <reaction evidence="1">
        <text>(2R)-2-phosphoglycerate = (2R)-3-phosphoglycerate</text>
        <dbReference type="Rhea" id="RHEA:15901"/>
        <dbReference type="ChEBI" id="CHEBI:58272"/>
        <dbReference type="ChEBI" id="CHEBI:58289"/>
        <dbReference type="EC" id="5.4.2.11"/>
    </reaction>
</comment>
<comment type="pathway">
    <text evidence="1">Carbohydrate degradation; glycolysis; pyruvate from D-glyceraldehyde 3-phosphate: step 3/5.</text>
</comment>
<comment type="subunit">
    <text evidence="1">Homodimer.</text>
</comment>
<comment type="similarity">
    <text evidence="1">Belongs to the phosphoglycerate mutase family. BPG-dependent PGAM subfamily.</text>
</comment>
<name>GPMA_SERP5</name>
<protein>
    <recommendedName>
        <fullName evidence="1">2,3-bisphosphoglycerate-dependent phosphoglycerate mutase</fullName>
        <shortName evidence="1">BPG-dependent PGAM</shortName>
        <shortName evidence="1">PGAM</shortName>
        <shortName evidence="1">Phosphoglyceromutase</shortName>
        <shortName evidence="1">dPGM</shortName>
        <ecNumber evidence="1">5.4.2.11</ecNumber>
    </recommendedName>
</protein>
<feature type="chain" id="PRO_1000064094" description="2,3-bisphosphoglycerate-dependent phosphoglycerate mutase">
    <location>
        <begin position="1"/>
        <end position="250"/>
    </location>
</feature>
<feature type="active site" description="Tele-phosphohistidine intermediate" evidence="1">
    <location>
        <position position="11"/>
    </location>
</feature>
<feature type="active site" description="Proton donor/acceptor" evidence="1">
    <location>
        <position position="89"/>
    </location>
</feature>
<feature type="binding site" evidence="1">
    <location>
        <begin position="10"/>
        <end position="17"/>
    </location>
    <ligand>
        <name>substrate</name>
    </ligand>
</feature>
<feature type="binding site" evidence="1">
    <location>
        <begin position="23"/>
        <end position="24"/>
    </location>
    <ligand>
        <name>substrate</name>
    </ligand>
</feature>
<feature type="binding site" evidence="1">
    <location>
        <position position="62"/>
    </location>
    <ligand>
        <name>substrate</name>
    </ligand>
</feature>
<feature type="binding site" evidence="1">
    <location>
        <begin position="89"/>
        <end position="92"/>
    </location>
    <ligand>
        <name>substrate</name>
    </ligand>
</feature>
<feature type="binding site" evidence="1">
    <location>
        <position position="100"/>
    </location>
    <ligand>
        <name>substrate</name>
    </ligand>
</feature>
<feature type="binding site" evidence="1">
    <location>
        <begin position="116"/>
        <end position="117"/>
    </location>
    <ligand>
        <name>substrate</name>
    </ligand>
</feature>
<feature type="binding site" evidence="1">
    <location>
        <begin position="185"/>
        <end position="186"/>
    </location>
    <ligand>
        <name>substrate</name>
    </ligand>
</feature>
<feature type="site" description="Transition state stabilizer" evidence="1">
    <location>
        <position position="184"/>
    </location>
</feature>
<sequence>MAVTKLVLVRHGESQWNNENRFTGWYDVDLSEKGRTEAKAAGELLKNEGFAFDFAYTSVLKRAIHTLWNILDELDQAWLPTEKSWKLNERHYGALQGLNKAETAEKYGDEQVKQWRRGFAVTPPELTKDDERYPGHDPRYSALTEQELPLTESLALTIDRVIPYWDEEILPRIKSGERVIVAAHGNSLRALVKYLDNLSEDEILELNIPTGVPLVYEFDENFKPIKRYYLGNADEIAAKAAAVANQGKAK</sequence>
<dbReference type="EC" id="5.4.2.11" evidence="1"/>
<dbReference type="EMBL" id="CP000826">
    <property type="protein sequence ID" value="ABV40392.1"/>
    <property type="molecule type" value="Genomic_DNA"/>
</dbReference>
<dbReference type="SMR" id="A8GBA2"/>
<dbReference type="STRING" id="399741.Spro_1288"/>
<dbReference type="KEGG" id="spe:Spro_1288"/>
<dbReference type="eggNOG" id="COG0588">
    <property type="taxonomic scope" value="Bacteria"/>
</dbReference>
<dbReference type="HOGENOM" id="CLU_033323_1_1_6"/>
<dbReference type="OrthoDB" id="9781415at2"/>
<dbReference type="UniPathway" id="UPA00109">
    <property type="reaction ID" value="UER00186"/>
</dbReference>
<dbReference type="GO" id="GO:0004619">
    <property type="term" value="F:phosphoglycerate mutase activity"/>
    <property type="evidence" value="ECO:0007669"/>
    <property type="project" value="UniProtKB-EC"/>
</dbReference>
<dbReference type="GO" id="GO:0006094">
    <property type="term" value="P:gluconeogenesis"/>
    <property type="evidence" value="ECO:0007669"/>
    <property type="project" value="UniProtKB-UniRule"/>
</dbReference>
<dbReference type="GO" id="GO:0006096">
    <property type="term" value="P:glycolytic process"/>
    <property type="evidence" value="ECO:0007669"/>
    <property type="project" value="UniProtKB-UniRule"/>
</dbReference>
<dbReference type="CDD" id="cd07067">
    <property type="entry name" value="HP_PGM_like"/>
    <property type="match status" value="1"/>
</dbReference>
<dbReference type="FunFam" id="3.40.50.1240:FF:000003">
    <property type="entry name" value="2,3-bisphosphoglycerate-dependent phosphoglycerate mutase"/>
    <property type="match status" value="1"/>
</dbReference>
<dbReference type="Gene3D" id="3.40.50.1240">
    <property type="entry name" value="Phosphoglycerate mutase-like"/>
    <property type="match status" value="1"/>
</dbReference>
<dbReference type="HAMAP" id="MF_01039">
    <property type="entry name" value="PGAM_GpmA"/>
    <property type="match status" value="1"/>
</dbReference>
<dbReference type="InterPro" id="IPR013078">
    <property type="entry name" value="His_Pase_superF_clade-1"/>
</dbReference>
<dbReference type="InterPro" id="IPR029033">
    <property type="entry name" value="His_PPase_superfam"/>
</dbReference>
<dbReference type="InterPro" id="IPR001345">
    <property type="entry name" value="PG/BPGM_mutase_AS"/>
</dbReference>
<dbReference type="InterPro" id="IPR005952">
    <property type="entry name" value="Phosphogly_mut1"/>
</dbReference>
<dbReference type="NCBIfam" id="TIGR01258">
    <property type="entry name" value="pgm_1"/>
    <property type="match status" value="1"/>
</dbReference>
<dbReference type="NCBIfam" id="NF010713">
    <property type="entry name" value="PRK14115.1"/>
    <property type="match status" value="1"/>
</dbReference>
<dbReference type="PANTHER" id="PTHR11931">
    <property type="entry name" value="PHOSPHOGLYCERATE MUTASE"/>
    <property type="match status" value="1"/>
</dbReference>
<dbReference type="Pfam" id="PF00300">
    <property type="entry name" value="His_Phos_1"/>
    <property type="match status" value="1"/>
</dbReference>
<dbReference type="PIRSF" id="PIRSF000709">
    <property type="entry name" value="6PFK_2-Ptase"/>
    <property type="match status" value="1"/>
</dbReference>
<dbReference type="SMART" id="SM00855">
    <property type="entry name" value="PGAM"/>
    <property type="match status" value="1"/>
</dbReference>
<dbReference type="SUPFAM" id="SSF53254">
    <property type="entry name" value="Phosphoglycerate mutase-like"/>
    <property type="match status" value="1"/>
</dbReference>
<dbReference type="PROSITE" id="PS00175">
    <property type="entry name" value="PG_MUTASE"/>
    <property type="match status" value="1"/>
</dbReference>
<accession>A8GBA2</accession>
<evidence type="ECO:0000255" key="1">
    <source>
        <dbReference type="HAMAP-Rule" id="MF_01039"/>
    </source>
</evidence>
<organism>
    <name type="scientific">Serratia proteamaculans (strain 568)</name>
    <dbReference type="NCBI Taxonomy" id="399741"/>
    <lineage>
        <taxon>Bacteria</taxon>
        <taxon>Pseudomonadati</taxon>
        <taxon>Pseudomonadota</taxon>
        <taxon>Gammaproteobacteria</taxon>
        <taxon>Enterobacterales</taxon>
        <taxon>Yersiniaceae</taxon>
        <taxon>Serratia</taxon>
    </lineage>
</organism>
<keyword id="KW-0312">Gluconeogenesis</keyword>
<keyword id="KW-0324">Glycolysis</keyword>
<keyword id="KW-0413">Isomerase</keyword>
<proteinExistence type="inferred from homology"/>